<dbReference type="EMBL" id="U76759">
    <property type="protein sequence ID" value="AAC52963.1"/>
    <property type="molecule type" value="mRNA"/>
</dbReference>
<dbReference type="EMBL" id="AK005947">
    <property type="protein sequence ID" value="BAB24331.1"/>
    <property type="status" value="ALT_FRAME"/>
    <property type="molecule type" value="mRNA"/>
</dbReference>
<dbReference type="EMBL" id="AK030107">
    <property type="protein sequence ID" value="BAC26788.1"/>
    <property type="molecule type" value="mRNA"/>
</dbReference>
<dbReference type="EMBL" id="BC113761">
    <property type="protein sequence ID" value="AAI13762.1"/>
    <property type="molecule type" value="mRNA"/>
</dbReference>
<dbReference type="CCDS" id="CCDS21827.1"/>
<dbReference type="RefSeq" id="NP_035030.2">
    <property type="nucleotide sequence ID" value="NM_010900.4"/>
</dbReference>
<dbReference type="PDB" id="3A4R">
    <property type="method" value="X-ray"/>
    <property type="resolution" value="1.00 A"/>
    <property type="chains" value="A/B=339-412"/>
</dbReference>
<dbReference type="PDB" id="3A4S">
    <property type="method" value="X-ray"/>
    <property type="resolution" value="2.70 A"/>
    <property type="chains" value="C/D=339-412"/>
</dbReference>
<dbReference type="PDBsum" id="3A4R"/>
<dbReference type="PDBsum" id="3A4S"/>
<dbReference type="SMR" id="O09130"/>
<dbReference type="BioGRID" id="201740">
    <property type="interactions" value="2"/>
</dbReference>
<dbReference type="CORUM" id="O09130"/>
<dbReference type="FunCoup" id="O09130">
    <property type="interactions" value="2539"/>
</dbReference>
<dbReference type="IntAct" id="O09130">
    <property type="interactions" value="1"/>
</dbReference>
<dbReference type="MINT" id="O09130"/>
<dbReference type="STRING" id="10090.ENSMUSP00000075094"/>
<dbReference type="GlyGen" id="O09130">
    <property type="glycosylation" value="1 site"/>
</dbReference>
<dbReference type="iPTMnet" id="O09130"/>
<dbReference type="PhosphoSitePlus" id="O09130"/>
<dbReference type="SwissPalm" id="O09130"/>
<dbReference type="jPOST" id="O09130"/>
<dbReference type="PaxDb" id="10090-ENSMUSP00000075094"/>
<dbReference type="PeptideAtlas" id="O09130"/>
<dbReference type="ProteomicsDB" id="287488"/>
<dbReference type="Pumba" id="O09130"/>
<dbReference type="Antibodypedia" id="26645">
    <property type="antibodies" value="88 antibodies from 23 providers"/>
</dbReference>
<dbReference type="DNASU" id="18020"/>
<dbReference type="Ensembl" id="ENSMUST00000075671.5">
    <property type="protein sequence ID" value="ENSMUSP00000075094.5"/>
    <property type="gene ID" value="ENSMUSG00000030722.8"/>
</dbReference>
<dbReference type="GeneID" id="18020"/>
<dbReference type="KEGG" id="mmu:18020"/>
<dbReference type="UCSC" id="uc009jra.1">
    <property type="organism name" value="mouse"/>
</dbReference>
<dbReference type="AGR" id="MGI:1329015"/>
<dbReference type="CTD" id="84901"/>
<dbReference type="MGI" id="MGI:1329015">
    <property type="gene designation" value="Nfatc2ip"/>
</dbReference>
<dbReference type="VEuPathDB" id="HostDB:ENSMUSG00000030722"/>
<dbReference type="eggNOG" id="KOG1769">
    <property type="taxonomic scope" value="Eukaryota"/>
</dbReference>
<dbReference type="GeneTree" id="ENSGT00390000007119"/>
<dbReference type="HOGENOM" id="CLU_055132_1_0_1"/>
<dbReference type="InParanoid" id="O09130"/>
<dbReference type="OMA" id="NVVDHMA"/>
<dbReference type="OrthoDB" id="442921at2759"/>
<dbReference type="PhylomeDB" id="O09130"/>
<dbReference type="TreeFam" id="TF328600"/>
<dbReference type="BioGRID-ORCS" id="18020">
    <property type="hits" value="1 hit in 78 CRISPR screens"/>
</dbReference>
<dbReference type="ChiTaRS" id="Nfatc2ip">
    <property type="organism name" value="mouse"/>
</dbReference>
<dbReference type="EvolutionaryTrace" id="O09130"/>
<dbReference type="PRO" id="PR:O09130"/>
<dbReference type="Proteomes" id="UP000000589">
    <property type="component" value="Chromosome 7"/>
</dbReference>
<dbReference type="RNAct" id="O09130">
    <property type="molecule type" value="protein"/>
</dbReference>
<dbReference type="Bgee" id="ENSMUSG00000030722">
    <property type="expression patterns" value="Expressed in cumulus cell and 230 other cell types or tissues"/>
</dbReference>
<dbReference type="ExpressionAtlas" id="O09130">
    <property type="expression patterns" value="baseline and differential"/>
</dbReference>
<dbReference type="GO" id="GO:0005737">
    <property type="term" value="C:cytoplasm"/>
    <property type="evidence" value="ECO:0007669"/>
    <property type="project" value="UniProtKB-SubCell"/>
</dbReference>
<dbReference type="GO" id="GO:0005634">
    <property type="term" value="C:nucleus"/>
    <property type="evidence" value="ECO:0000305"/>
    <property type="project" value="MGI"/>
</dbReference>
<dbReference type="GO" id="GO:0045944">
    <property type="term" value="P:positive regulation of transcription by RNA polymerase II"/>
    <property type="evidence" value="ECO:0000314"/>
    <property type="project" value="MGI"/>
</dbReference>
<dbReference type="CDD" id="cd17078">
    <property type="entry name" value="Ubl_SLD1_NFATC2ip"/>
    <property type="match status" value="1"/>
</dbReference>
<dbReference type="CDD" id="cd17079">
    <property type="entry name" value="Ubl_SLD2_NFATC2ip"/>
    <property type="match status" value="1"/>
</dbReference>
<dbReference type="Gene3D" id="3.10.20.90">
    <property type="entry name" value="Phosphatidylinositol 3-kinase Catalytic Subunit, Chain A, domain 1"/>
    <property type="match status" value="2"/>
</dbReference>
<dbReference type="InterPro" id="IPR052324">
    <property type="entry name" value="NFATC2-Int_DNA_Repair"/>
</dbReference>
<dbReference type="InterPro" id="IPR022617">
    <property type="entry name" value="Rad60/SUMO-like_dom"/>
</dbReference>
<dbReference type="InterPro" id="IPR000626">
    <property type="entry name" value="Ubiquitin-like_dom"/>
</dbReference>
<dbReference type="InterPro" id="IPR029071">
    <property type="entry name" value="Ubiquitin-like_domsf"/>
</dbReference>
<dbReference type="PANTHER" id="PTHR47187">
    <property type="entry name" value="NFATC2-INTERACTING PROTEIN"/>
    <property type="match status" value="1"/>
</dbReference>
<dbReference type="PANTHER" id="PTHR47187:SF1">
    <property type="entry name" value="NFATC2-INTERACTING PROTEIN"/>
    <property type="match status" value="1"/>
</dbReference>
<dbReference type="Pfam" id="PF11976">
    <property type="entry name" value="Rad60-SLD"/>
    <property type="match status" value="1"/>
</dbReference>
<dbReference type="SMART" id="SM00213">
    <property type="entry name" value="UBQ"/>
    <property type="match status" value="1"/>
</dbReference>
<dbReference type="SUPFAM" id="SSF54236">
    <property type="entry name" value="Ubiquitin-like"/>
    <property type="match status" value="2"/>
</dbReference>
<dbReference type="PROSITE" id="PS50053">
    <property type="entry name" value="UBIQUITIN_2"/>
    <property type="match status" value="1"/>
</dbReference>
<organism>
    <name type="scientific">Mus musculus</name>
    <name type="common">Mouse</name>
    <dbReference type="NCBI Taxonomy" id="10090"/>
    <lineage>
        <taxon>Eukaryota</taxon>
        <taxon>Metazoa</taxon>
        <taxon>Chordata</taxon>
        <taxon>Craniata</taxon>
        <taxon>Vertebrata</taxon>
        <taxon>Euteleostomi</taxon>
        <taxon>Mammalia</taxon>
        <taxon>Eutheria</taxon>
        <taxon>Euarchontoglires</taxon>
        <taxon>Glires</taxon>
        <taxon>Rodentia</taxon>
        <taxon>Myomorpha</taxon>
        <taxon>Muroidea</taxon>
        <taxon>Muridae</taxon>
        <taxon>Murinae</taxon>
        <taxon>Mus</taxon>
        <taxon>Mus</taxon>
    </lineage>
</organism>
<name>NF2IP_MOUSE</name>
<evidence type="ECO:0000250" key="1">
    <source>
        <dbReference type="UniProtKB" id="Q6AYG7"/>
    </source>
</evidence>
<evidence type="ECO:0000250" key="2">
    <source>
        <dbReference type="UniProtKB" id="Q8NCF5"/>
    </source>
</evidence>
<evidence type="ECO:0000255" key="3"/>
<evidence type="ECO:0000255" key="4">
    <source>
        <dbReference type="PROSITE-ProRule" id="PRU00214"/>
    </source>
</evidence>
<evidence type="ECO:0000256" key="5">
    <source>
        <dbReference type="SAM" id="MobiDB-lite"/>
    </source>
</evidence>
<evidence type="ECO:0000269" key="6">
    <source>
    </source>
</evidence>
<evidence type="ECO:0000269" key="7">
    <source>
    </source>
</evidence>
<evidence type="ECO:0000269" key="8">
    <source>
    </source>
</evidence>
<evidence type="ECO:0000269" key="9">
    <source>
    </source>
</evidence>
<evidence type="ECO:0000269" key="10">
    <source>
    </source>
</evidence>
<evidence type="ECO:0000269" key="11">
    <source>
    </source>
</evidence>
<evidence type="ECO:0000305" key="12"/>
<evidence type="ECO:0007744" key="13">
    <source>
    </source>
</evidence>
<evidence type="ECO:0007744" key="14">
    <source>
    </source>
</evidence>
<evidence type="ECO:0007829" key="15">
    <source>
        <dbReference type="PDB" id="3A4R"/>
    </source>
</evidence>
<evidence type="ECO:0007829" key="16">
    <source>
        <dbReference type="PDB" id="3A4S"/>
    </source>
</evidence>
<accession>O09130</accession>
<accession>Q8CDG2</accession>
<accession>Q9CVY5</accession>
<reference key="1">
    <citation type="journal article" date="1996" name="Science">
        <title>NF-AT-driven interleukin-4 transcription potentiated by NIP45.</title>
        <authorList>
            <person name="Hodge M.R."/>
            <person name="Chun H.J."/>
            <person name="Rengarajan J."/>
            <person name="Alt A."/>
            <person name="Lieberson R."/>
            <person name="Glimcher L.H."/>
        </authorList>
    </citation>
    <scope>NUCLEOTIDE SEQUENCE [MRNA]</scope>
    <scope>TISSUE SPECIFICITY</scope>
    <scope>SUBCELLULAR LOCATION</scope>
    <scope>INTERACTION WITH NFATC2</scope>
</reference>
<reference key="2">
    <citation type="journal article" date="2005" name="Science">
        <title>The transcriptional landscape of the mammalian genome.</title>
        <authorList>
            <person name="Carninci P."/>
            <person name="Kasukawa T."/>
            <person name="Katayama S."/>
            <person name="Gough J."/>
            <person name="Frith M.C."/>
            <person name="Maeda N."/>
            <person name="Oyama R."/>
            <person name="Ravasi T."/>
            <person name="Lenhard B."/>
            <person name="Wells C."/>
            <person name="Kodzius R."/>
            <person name="Shimokawa K."/>
            <person name="Bajic V.B."/>
            <person name="Brenner S.E."/>
            <person name="Batalov S."/>
            <person name="Forrest A.R."/>
            <person name="Zavolan M."/>
            <person name="Davis M.J."/>
            <person name="Wilming L.G."/>
            <person name="Aidinis V."/>
            <person name="Allen J.E."/>
            <person name="Ambesi-Impiombato A."/>
            <person name="Apweiler R."/>
            <person name="Aturaliya R.N."/>
            <person name="Bailey T.L."/>
            <person name="Bansal M."/>
            <person name="Baxter L."/>
            <person name="Beisel K.W."/>
            <person name="Bersano T."/>
            <person name="Bono H."/>
            <person name="Chalk A.M."/>
            <person name="Chiu K.P."/>
            <person name="Choudhary V."/>
            <person name="Christoffels A."/>
            <person name="Clutterbuck D.R."/>
            <person name="Crowe M.L."/>
            <person name="Dalla E."/>
            <person name="Dalrymple B.P."/>
            <person name="de Bono B."/>
            <person name="Della Gatta G."/>
            <person name="di Bernardo D."/>
            <person name="Down T."/>
            <person name="Engstrom P."/>
            <person name="Fagiolini M."/>
            <person name="Faulkner G."/>
            <person name="Fletcher C.F."/>
            <person name="Fukushima T."/>
            <person name="Furuno M."/>
            <person name="Futaki S."/>
            <person name="Gariboldi M."/>
            <person name="Georgii-Hemming P."/>
            <person name="Gingeras T.R."/>
            <person name="Gojobori T."/>
            <person name="Green R.E."/>
            <person name="Gustincich S."/>
            <person name="Harbers M."/>
            <person name="Hayashi Y."/>
            <person name="Hensch T.K."/>
            <person name="Hirokawa N."/>
            <person name="Hill D."/>
            <person name="Huminiecki L."/>
            <person name="Iacono M."/>
            <person name="Ikeo K."/>
            <person name="Iwama A."/>
            <person name="Ishikawa T."/>
            <person name="Jakt M."/>
            <person name="Kanapin A."/>
            <person name="Katoh M."/>
            <person name="Kawasawa Y."/>
            <person name="Kelso J."/>
            <person name="Kitamura H."/>
            <person name="Kitano H."/>
            <person name="Kollias G."/>
            <person name="Krishnan S.P."/>
            <person name="Kruger A."/>
            <person name="Kummerfeld S.K."/>
            <person name="Kurochkin I.V."/>
            <person name="Lareau L.F."/>
            <person name="Lazarevic D."/>
            <person name="Lipovich L."/>
            <person name="Liu J."/>
            <person name="Liuni S."/>
            <person name="McWilliam S."/>
            <person name="Madan Babu M."/>
            <person name="Madera M."/>
            <person name="Marchionni L."/>
            <person name="Matsuda H."/>
            <person name="Matsuzawa S."/>
            <person name="Miki H."/>
            <person name="Mignone F."/>
            <person name="Miyake S."/>
            <person name="Morris K."/>
            <person name="Mottagui-Tabar S."/>
            <person name="Mulder N."/>
            <person name="Nakano N."/>
            <person name="Nakauchi H."/>
            <person name="Ng P."/>
            <person name="Nilsson R."/>
            <person name="Nishiguchi S."/>
            <person name="Nishikawa S."/>
            <person name="Nori F."/>
            <person name="Ohara O."/>
            <person name="Okazaki Y."/>
            <person name="Orlando V."/>
            <person name="Pang K.C."/>
            <person name="Pavan W.J."/>
            <person name="Pavesi G."/>
            <person name="Pesole G."/>
            <person name="Petrovsky N."/>
            <person name="Piazza S."/>
            <person name="Reed J."/>
            <person name="Reid J.F."/>
            <person name="Ring B.Z."/>
            <person name="Ringwald M."/>
            <person name="Rost B."/>
            <person name="Ruan Y."/>
            <person name="Salzberg S.L."/>
            <person name="Sandelin A."/>
            <person name="Schneider C."/>
            <person name="Schoenbach C."/>
            <person name="Sekiguchi K."/>
            <person name="Semple C.A."/>
            <person name="Seno S."/>
            <person name="Sessa L."/>
            <person name="Sheng Y."/>
            <person name="Shibata Y."/>
            <person name="Shimada H."/>
            <person name="Shimada K."/>
            <person name="Silva D."/>
            <person name="Sinclair B."/>
            <person name="Sperling S."/>
            <person name="Stupka E."/>
            <person name="Sugiura K."/>
            <person name="Sultana R."/>
            <person name="Takenaka Y."/>
            <person name="Taki K."/>
            <person name="Tammoja K."/>
            <person name="Tan S.L."/>
            <person name="Tang S."/>
            <person name="Taylor M.S."/>
            <person name="Tegner J."/>
            <person name="Teichmann S.A."/>
            <person name="Ueda H.R."/>
            <person name="van Nimwegen E."/>
            <person name="Verardo R."/>
            <person name="Wei C.L."/>
            <person name="Yagi K."/>
            <person name="Yamanishi H."/>
            <person name="Zabarovsky E."/>
            <person name="Zhu S."/>
            <person name="Zimmer A."/>
            <person name="Hide W."/>
            <person name="Bult C."/>
            <person name="Grimmond S.M."/>
            <person name="Teasdale R.D."/>
            <person name="Liu E.T."/>
            <person name="Brusic V."/>
            <person name="Quackenbush J."/>
            <person name="Wahlestedt C."/>
            <person name="Mattick J.S."/>
            <person name="Hume D.A."/>
            <person name="Kai C."/>
            <person name="Sasaki D."/>
            <person name="Tomaru Y."/>
            <person name="Fukuda S."/>
            <person name="Kanamori-Katayama M."/>
            <person name="Suzuki M."/>
            <person name="Aoki J."/>
            <person name="Arakawa T."/>
            <person name="Iida J."/>
            <person name="Imamura K."/>
            <person name="Itoh M."/>
            <person name="Kato T."/>
            <person name="Kawaji H."/>
            <person name="Kawagashira N."/>
            <person name="Kawashima T."/>
            <person name="Kojima M."/>
            <person name="Kondo S."/>
            <person name="Konno H."/>
            <person name="Nakano K."/>
            <person name="Ninomiya N."/>
            <person name="Nishio T."/>
            <person name="Okada M."/>
            <person name="Plessy C."/>
            <person name="Shibata K."/>
            <person name="Shiraki T."/>
            <person name="Suzuki S."/>
            <person name="Tagami M."/>
            <person name="Waki K."/>
            <person name="Watahiki A."/>
            <person name="Okamura-Oho Y."/>
            <person name="Suzuki H."/>
            <person name="Kawai J."/>
            <person name="Hayashizaki Y."/>
        </authorList>
    </citation>
    <scope>NUCLEOTIDE SEQUENCE [LARGE SCALE MRNA]</scope>
    <source>
        <strain>C57BL/6J</strain>
        <tissue>Testis</tissue>
    </source>
</reference>
<reference key="3">
    <citation type="journal article" date="2004" name="Genome Res.">
        <title>The status, quality, and expansion of the NIH full-length cDNA project: the Mammalian Gene Collection (MGC).</title>
        <authorList>
            <consortium name="The MGC Project Team"/>
        </authorList>
    </citation>
    <scope>NUCLEOTIDE SEQUENCE [LARGE SCALE MRNA]</scope>
</reference>
<reference key="4">
    <citation type="journal article" date="2001" name="J. Exp. Med.">
        <title>Tumor necrosis factor receptor-associated factor (TRAF)2 represses the T helper cell type 2 response through interaction with NFAT-interacting protein (NIP45).</title>
        <authorList>
            <person name="Lieberson R."/>
            <person name="Mowen K.A."/>
            <person name="McBride K.D."/>
            <person name="Leautaud V."/>
            <person name="Zhang X."/>
            <person name="Suh W.-K."/>
            <person name="Wu L."/>
            <person name="Glimcher L.H."/>
        </authorList>
    </citation>
    <scope>INTERACTION WITH TRAF2</scope>
</reference>
<reference key="5">
    <citation type="journal article" date="2004" name="Mol. Cell">
        <title>Arginine methylation of NIP45 modulates cytokine gene expression in effector T lymphocytes.</title>
        <authorList>
            <person name="Mowen K.A."/>
            <person name="Schurter B.T."/>
            <person name="Fathman J.W."/>
            <person name="David M."/>
            <person name="Glimcher L.H."/>
        </authorList>
    </citation>
    <scope>SUBCELLULAR LOCATION</scope>
    <scope>METHYLATION</scope>
</reference>
<reference key="6">
    <citation type="journal article" date="2006" name="Int. Immunol.">
        <title>TRAF1 regulates Th2 differentiation, allergic inflammation and nuclear localization of the Th2 transcription factor, NIP45.</title>
        <authorList>
            <person name="Bryce P.J."/>
            <person name="Oyoshi M.K."/>
            <person name="Kawamoto S."/>
            <person name="Oettgen H.C."/>
            <person name="Tsitsikov E.N."/>
        </authorList>
    </citation>
    <scope>INTERACTION WITH TRAF1</scope>
    <scope>SUBCELLULAR LOCATION</scope>
</reference>
<reference key="7">
    <citation type="journal article" date="2007" name="Proc. Natl. Acad. Sci. U.S.A.">
        <title>Large-scale phosphorylation analysis of mouse liver.</title>
        <authorList>
            <person name="Villen J."/>
            <person name="Beausoleil S.A."/>
            <person name="Gerber S.A."/>
            <person name="Gygi S.P."/>
        </authorList>
    </citation>
    <scope>PHOSPHORYLATION [LARGE SCALE ANALYSIS] AT SER-79</scope>
    <scope>IDENTIFICATION BY MASS SPECTROMETRY [LARGE SCALE ANALYSIS]</scope>
    <source>
        <tissue>Liver</tissue>
    </source>
</reference>
<reference key="8">
    <citation type="journal article" date="2010" name="Cell">
        <title>A tissue-specific atlas of mouse protein phosphorylation and expression.</title>
        <authorList>
            <person name="Huttlin E.L."/>
            <person name="Jedrychowski M.P."/>
            <person name="Elias J.E."/>
            <person name="Goswami T."/>
            <person name="Rad R."/>
            <person name="Beausoleil S.A."/>
            <person name="Villen J."/>
            <person name="Haas W."/>
            <person name="Sowa M.E."/>
            <person name="Gygi S.P."/>
        </authorList>
    </citation>
    <scope>PHOSPHORYLATION [LARGE SCALE ANALYSIS] AT SER-79; SER-81; SER-83; SER-191 AND SER-362</scope>
    <scope>IDENTIFICATION BY MASS SPECTROMETRY [LARGE SCALE ANALYSIS]</scope>
    <source>
        <tissue>Kidney</tissue>
        <tissue>Liver</tissue>
        <tissue>Lung</tissue>
        <tissue>Spleen</tissue>
        <tissue>Testis</tissue>
    </source>
</reference>
<reference key="9">
    <citation type="journal article" date="2010" name="Proc. Natl. Acad. Sci. U.S.A.">
        <title>NIP45 controls the magnitude of the type 2 T helper cell response.</title>
        <authorList>
            <person name="Fathman J.W."/>
            <person name="Gurish M.F."/>
            <person name="Hemmers S."/>
            <person name="Bonham K."/>
            <person name="Friend D.S."/>
            <person name="Grusby M.J."/>
            <person name="Glimcher L.H."/>
            <person name="Mowen K.A."/>
        </authorList>
    </citation>
    <scope>FUNCTION</scope>
    <scope>DISRUPTION PHENOTYPE</scope>
</reference>
<reference key="10">
    <citation type="journal article" date="2010" name="Proteins">
        <title>Structural basis for regulation of poly-SUMO chain by a SUMO-like domain of Nip45.</title>
        <authorList>
            <person name="Sekiyama N."/>
            <person name="Arita K."/>
            <person name="Ikeda Y."/>
            <person name="Hashiguchi K."/>
            <person name="Ariyoshi M."/>
            <person name="Tochio H."/>
            <person name="Saitoh H."/>
            <person name="Shirakawa M."/>
        </authorList>
    </citation>
    <scope>X-RAY CRYSTALLOGRAPHY (1.0 ANGSTROMS) OF 338-412 IN COMPLEX WITH UBE2I/UBC9</scope>
    <scope>FUNCTION</scope>
</reference>
<sequence length="412" mass="45121">MAEPLRGRGPRSRGGRGARRARGARGRCPRARQSPARLIPDTVLVDLVSDSDEEVLEVADPVEVPVARLPAPAKPEQDSDSDSEGAAEGPAGAPRTLVRRRRRRLLDPGEAPVVPVYSGKVQSSLNLIPDNSSLLKLCPSEPEDEADLTNSGSSPSEDDALPSGSPWRKKLRKKCEKEEKKMEEFPDQDISPLPQPSSRNKSRKHTEALQKLREVNKRLQDLRSCLSPKQHQSPALQSTDDEVVLVEGPVLPQSSRLFTLKIRCRADLVRLPVRMSEPLQNVVDHMANHLGVSPNRILLLFGESELSPTATPSTLKLGVADIIDCVVLASSSEATETSQELRLRVQGKEKHQMLEISLSPDSPLKVLMSHYEEAMGLSGHKLSFFFDGTKLSGKELPADLGLESGDLIEVWG</sequence>
<comment type="function">
    <text evidence="9 10">In T-helper 2 (Th2) cells, regulates the magnitude of NFAT-driven transcription of a specific subset of cytokine genes, including IL3, IL4, IL5 and IL13, but not IL2. Recruits PRMT1 to the IL4 promoter; this leads to enhancement of histone H4 'Arg-3'-methylation and facilitates subsequent histone acetylation at the IL4 locus, thus promotes robust cytokine expression. Down-regulates formation of poly-SUMO chains by UBE2I/UBC9.</text>
</comment>
<comment type="subunit">
    <text evidence="6 8 9 11">Interacts with NFATC2, TRAF1, TRAF2 and PRMT1. Interacts with UBE2I/UBC9.</text>
</comment>
<comment type="subcellular location">
    <subcellularLocation>
        <location>Nucleus</location>
    </subcellularLocation>
    <subcellularLocation>
        <location>Cytoplasm</location>
    </subcellularLocation>
    <text>TRAF1 is associated with a fraction of NFATC2IP in the cytoplasm and prevents its translocation to the nucleus.</text>
</comment>
<comment type="tissue specificity">
    <text evidence="11">Highest level detected in spleen, thymus and testis.</text>
</comment>
<comment type="PTM">
    <text evidence="7">Methylation at the N-terminus by PRMT1 modulates interaction with the NFAT complex and results in augmented cytokine production.</text>
</comment>
<comment type="disruption phenotype">
    <text evidence="10">Mutant mice are born at the expected Mendelian ratio and appear healthy and viable. No alteration in thymic T-cell populations, T-cell proliferation, or peripheral lymphocyte development. Inefficient type-2 antiparasitic immune response to the intestinal nematode Trichinella spiralis due to impaired IL4 and IL13 cytokine production by Th2 cells.</text>
</comment>
<comment type="sequence caution" evidence="12">
    <conflict type="frameshift">
        <sequence resource="EMBL-CDS" id="BAB24331"/>
    </conflict>
</comment>
<protein>
    <recommendedName>
        <fullName>NFATC2-interacting protein</fullName>
    </recommendedName>
    <alternativeName>
        <fullName>45 kDa NF-AT-interacting protein</fullName>
        <shortName>45 kDa NFAT-interacting protein</shortName>
    </alternativeName>
    <alternativeName>
        <fullName>Nuclear factor of activated T-cells, cytoplasmic 2-interacting protein</fullName>
    </alternativeName>
</protein>
<proteinExistence type="evidence at protein level"/>
<feature type="chain" id="PRO_0000281009" description="NFATC2-interacting protein">
    <location>
        <begin position="1"/>
        <end position="412"/>
    </location>
</feature>
<feature type="domain" description="Ubiquitin-like" evidence="4">
    <location>
        <begin position="341"/>
        <end position="412"/>
    </location>
</feature>
<feature type="region of interest" description="Disordered" evidence="5">
    <location>
        <begin position="1"/>
        <end position="38"/>
    </location>
</feature>
<feature type="region of interest" description="Disordered" evidence="5">
    <location>
        <begin position="58"/>
        <end position="115"/>
    </location>
</feature>
<feature type="region of interest" description="Disordered" evidence="5">
    <location>
        <begin position="136"/>
        <end position="206"/>
    </location>
</feature>
<feature type="coiled-coil region" evidence="3">
    <location>
        <begin position="168"/>
        <end position="227"/>
    </location>
</feature>
<feature type="compositionally biased region" description="Basic residues" evidence="5">
    <location>
        <begin position="8"/>
        <end position="30"/>
    </location>
</feature>
<feature type="compositionally biased region" description="Low complexity" evidence="5">
    <location>
        <begin position="86"/>
        <end position="96"/>
    </location>
</feature>
<feature type="compositionally biased region" description="Basic and acidic residues" evidence="5">
    <location>
        <begin position="175"/>
        <end position="184"/>
    </location>
</feature>
<feature type="modified residue" description="Phosphoserine" evidence="1">
    <location>
        <position position="49"/>
    </location>
</feature>
<feature type="modified residue" description="Phosphoserine" evidence="1">
    <location>
        <position position="51"/>
    </location>
</feature>
<feature type="modified residue" description="Phosphoserine" evidence="13 14">
    <location>
        <position position="79"/>
    </location>
</feature>
<feature type="modified residue" description="Phosphoserine" evidence="14">
    <location>
        <position position="81"/>
    </location>
</feature>
<feature type="modified residue" description="Phosphoserine" evidence="14">
    <location>
        <position position="83"/>
    </location>
</feature>
<feature type="modified residue" description="Phosphoserine" evidence="2">
    <location>
        <position position="118"/>
    </location>
</feature>
<feature type="modified residue" description="Phosphoserine" evidence="14">
    <location>
        <position position="191"/>
    </location>
</feature>
<feature type="modified residue" description="Phosphoserine" evidence="2">
    <location>
        <position position="197"/>
    </location>
</feature>
<feature type="modified residue" description="Phosphoserine" evidence="2">
    <location>
        <position position="307"/>
    </location>
</feature>
<feature type="modified residue" description="Phosphothreonine" evidence="2">
    <location>
        <position position="309"/>
    </location>
</feature>
<feature type="modified residue" description="Phosphothreonine" evidence="2">
    <location>
        <position position="311"/>
    </location>
</feature>
<feature type="modified residue" description="Phosphoserine" evidence="14">
    <location>
        <position position="362"/>
    </location>
</feature>
<feature type="modified residue" description="Phosphoserine" evidence="2">
    <location>
        <position position="383"/>
    </location>
</feature>
<feature type="cross-link" description="Glycyl lysine isopeptide (Lys-Gly) (interchain with G-Cter in SUMO2)" evidence="2">
    <location>
        <position position="120"/>
    </location>
</feature>
<feature type="sequence conflict" description="In Ref. 2; BAC26788." evidence="12" ref="2">
    <original>A</original>
    <variation>G</variation>
    <location>
        <position position="2"/>
    </location>
</feature>
<feature type="sequence conflict" description="In Ref. 2; BAC26788." evidence="12" ref="2">
    <original>N</original>
    <variation>D</variation>
    <location>
        <position position="200"/>
    </location>
</feature>
<feature type="sequence conflict" description="In Ref. 2; BAB24331." evidence="12" ref="2">
    <original>KL</original>
    <variation>NS</variation>
    <location>
        <begin position="390"/>
        <end position="391"/>
    </location>
</feature>
<feature type="strand" evidence="15">
    <location>
        <begin position="341"/>
        <end position="346"/>
    </location>
</feature>
<feature type="strand" evidence="15">
    <location>
        <begin position="353"/>
        <end position="358"/>
    </location>
</feature>
<feature type="strand" evidence="16">
    <location>
        <begin position="360"/>
        <end position="362"/>
    </location>
</feature>
<feature type="helix" evidence="15">
    <location>
        <begin position="364"/>
        <end position="375"/>
    </location>
</feature>
<feature type="strand" evidence="15">
    <location>
        <begin position="383"/>
        <end position="386"/>
    </location>
</feature>
<feature type="helix" evidence="15">
    <location>
        <begin position="397"/>
        <end position="400"/>
    </location>
</feature>
<feature type="strand" evidence="15">
    <location>
        <begin position="407"/>
        <end position="411"/>
    </location>
</feature>
<keyword id="KW-0002">3D-structure</keyword>
<keyword id="KW-0175">Coiled coil</keyword>
<keyword id="KW-0963">Cytoplasm</keyword>
<keyword id="KW-1017">Isopeptide bond</keyword>
<keyword id="KW-0488">Methylation</keyword>
<keyword id="KW-0539">Nucleus</keyword>
<keyword id="KW-0597">Phosphoprotein</keyword>
<keyword id="KW-1185">Reference proteome</keyword>
<keyword id="KW-0832">Ubl conjugation</keyword>
<gene>
    <name type="primary">Nfatc2ip</name>
    <name type="synonym">Nip45</name>
</gene>